<evidence type="ECO:0000255" key="1">
    <source>
        <dbReference type="HAMAP-Rule" id="MF_00003"/>
    </source>
</evidence>
<reference key="1">
    <citation type="journal article" date="2008" name="Genome Biol.">
        <title>The complete genome, comparative and functional analysis of Stenotrophomonas maltophilia reveals an organism heavily shielded by drug resistance determinants.</title>
        <authorList>
            <person name="Crossman L.C."/>
            <person name="Gould V.C."/>
            <person name="Dow J.M."/>
            <person name="Vernikos G.S."/>
            <person name="Okazaki A."/>
            <person name="Sebaihia M."/>
            <person name="Saunders D."/>
            <person name="Arrowsmith C."/>
            <person name="Carver T."/>
            <person name="Peters N."/>
            <person name="Adlem E."/>
            <person name="Kerhornou A."/>
            <person name="Lord A."/>
            <person name="Murphy L."/>
            <person name="Seeger K."/>
            <person name="Squares R."/>
            <person name="Rutter S."/>
            <person name="Quail M.A."/>
            <person name="Rajandream M.A."/>
            <person name="Harris D."/>
            <person name="Churcher C."/>
            <person name="Bentley S.D."/>
            <person name="Parkhill J."/>
            <person name="Thomson N.R."/>
            <person name="Avison M.B."/>
        </authorList>
    </citation>
    <scope>NUCLEOTIDE SEQUENCE [LARGE SCALE GENOMIC DNA]</scope>
    <source>
        <strain>K279a</strain>
    </source>
</reference>
<feature type="chain" id="PRO_1000201653" description="Ribosome-binding factor A">
    <location>
        <begin position="1"/>
        <end position="127"/>
    </location>
</feature>
<sequence>MPKTFHRTDRVSAQLRRELGTLVHNAVREHGLPSVSVSDVEITRDMAHAKVFVTALMPERSAEAVAGLKELGYRLRMDLARAMKLRHVPELHFHYDDSVDRGEHIDNILRDLPDTLAAEKRRESDEE</sequence>
<comment type="function">
    <text evidence="1">One of several proteins that assist in the late maturation steps of the functional core of the 30S ribosomal subunit. Associates with free 30S ribosomal subunits (but not with 30S subunits that are part of 70S ribosomes or polysomes). Required for efficient processing of 16S rRNA. May interact with the 5'-terminal helix region of 16S rRNA.</text>
</comment>
<comment type="subunit">
    <text evidence="1">Monomer. Binds 30S ribosomal subunits, but not 50S ribosomal subunits or 70S ribosomes.</text>
</comment>
<comment type="subcellular location">
    <subcellularLocation>
        <location evidence="1">Cytoplasm</location>
    </subcellularLocation>
</comment>
<comment type="similarity">
    <text evidence="1">Belongs to the RbfA family.</text>
</comment>
<name>RBFA_STRMK</name>
<accession>B2FN89</accession>
<organism>
    <name type="scientific">Stenotrophomonas maltophilia (strain K279a)</name>
    <dbReference type="NCBI Taxonomy" id="522373"/>
    <lineage>
        <taxon>Bacteria</taxon>
        <taxon>Pseudomonadati</taxon>
        <taxon>Pseudomonadota</taxon>
        <taxon>Gammaproteobacteria</taxon>
        <taxon>Lysobacterales</taxon>
        <taxon>Lysobacteraceae</taxon>
        <taxon>Stenotrophomonas</taxon>
        <taxon>Stenotrophomonas maltophilia group</taxon>
    </lineage>
</organism>
<proteinExistence type="inferred from homology"/>
<keyword id="KW-0963">Cytoplasm</keyword>
<keyword id="KW-1185">Reference proteome</keyword>
<keyword id="KW-0690">Ribosome biogenesis</keyword>
<gene>
    <name evidence="1" type="primary">rbfA</name>
    <name type="ordered locus">Smlt3388</name>
</gene>
<protein>
    <recommendedName>
        <fullName evidence="1">Ribosome-binding factor A</fullName>
    </recommendedName>
</protein>
<dbReference type="EMBL" id="AM743169">
    <property type="protein sequence ID" value="CAQ46816.1"/>
    <property type="molecule type" value="Genomic_DNA"/>
</dbReference>
<dbReference type="RefSeq" id="WP_005410447.1">
    <property type="nucleotide sequence ID" value="NC_010943.1"/>
</dbReference>
<dbReference type="SMR" id="B2FN89"/>
<dbReference type="EnsemblBacteria" id="CAQ46816">
    <property type="protein sequence ID" value="CAQ46816"/>
    <property type="gene ID" value="Smlt3388"/>
</dbReference>
<dbReference type="GeneID" id="93834389"/>
<dbReference type="KEGG" id="sml:Smlt3388"/>
<dbReference type="eggNOG" id="COG0858">
    <property type="taxonomic scope" value="Bacteria"/>
</dbReference>
<dbReference type="HOGENOM" id="CLU_089475_5_0_6"/>
<dbReference type="Proteomes" id="UP000008840">
    <property type="component" value="Chromosome"/>
</dbReference>
<dbReference type="GO" id="GO:0005829">
    <property type="term" value="C:cytosol"/>
    <property type="evidence" value="ECO:0007669"/>
    <property type="project" value="TreeGrafter"/>
</dbReference>
<dbReference type="GO" id="GO:0043024">
    <property type="term" value="F:ribosomal small subunit binding"/>
    <property type="evidence" value="ECO:0007669"/>
    <property type="project" value="TreeGrafter"/>
</dbReference>
<dbReference type="GO" id="GO:0030490">
    <property type="term" value="P:maturation of SSU-rRNA"/>
    <property type="evidence" value="ECO:0007669"/>
    <property type="project" value="UniProtKB-UniRule"/>
</dbReference>
<dbReference type="Gene3D" id="3.30.300.20">
    <property type="match status" value="1"/>
</dbReference>
<dbReference type="HAMAP" id="MF_00003">
    <property type="entry name" value="RbfA"/>
    <property type="match status" value="1"/>
</dbReference>
<dbReference type="InterPro" id="IPR015946">
    <property type="entry name" value="KH_dom-like_a/b"/>
</dbReference>
<dbReference type="InterPro" id="IPR000238">
    <property type="entry name" value="RbfA"/>
</dbReference>
<dbReference type="InterPro" id="IPR023799">
    <property type="entry name" value="RbfA_dom_sf"/>
</dbReference>
<dbReference type="InterPro" id="IPR020053">
    <property type="entry name" value="Ribosome-bd_factorA_CS"/>
</dbReference>
<dbReference type="NCBIfam" id="TIGR00082">
    <property type="entry name" value="rbfA"/>
    <property type="match status" value="1"/>
</dbReference>
<dbReference type="PANTHER" id="PTHR33515">
    <property type="entry name" value="RIBOSOME-BINDING FACTOR A, CHLOROPLASTIC-RELATED"/>
    <property type="match status" value="1"/>
</dbReference>
<dbReference type="PANTHER" id="PTHR33515:SF1">
    <property type="entry name" value="RIBOSOME-BINDING FACTOR A, CHLOROPLASTIC-RELATED"/>
    <property type="match status" value="1"/>
</dbReference>
<dbReference type="Pfam" id="PF02033">
    <property type="entry name" value="RBFA"/>
    <property type="match status" value="1"/>
</dbReference>
<dbReference type="SUPFAM" id="SSF89919">
    <property type="entry name" value="Ribosome-binding factor A, RbfA"/>
    <property type="match status" value="1"/>
</dbReference>
<dbReference type="PROSITE" id="PS01319">
    <property type="entry name" value="RBFA"/>
    <property type="match status" value="1"/>
</dbReference>